<protein>
    <recommendedName>
        <fullName evidence="6 8">Ectopic P granules protein 5 homolog</fullName>
    </recommendedName>
</protein>
<feature type="chain" id="PRO_0000306259" description="Ectopic P granules protein 5 homolog">
    <location>
        <begin position="1"/>
        <end position="2455"/>
    </location>
</feature>
<feature type="region of interest" description="Disordered" evidence="2">
    <location>
        <begin position="1"/>
        <end position="42"/>
    </location>
</feature>
<feature type="region of interest" description="Disordered" evidence="2">
    <location>
        <begin position="77"/>
        <end position="105"/>
    </location>
</feature>
<feature type="compositionally biased region" description="Low complexity" evidence="2">
    <location>
        <begin position="80"/>
        <end position="97"/>
    </location>
</feature>
<feature type="modified residue" description="Phosphoserine" evidence="3">
    <location>
        <position position="44"/>
    </location>
</feature>
<feature type="modified residue" description="Phosphoserine" evidence="3">
    <location>
        <position position="467"/>
    </location>
</feature>
<feature type="splice variant" id="VSP_028436" description="In isoform B." evidence="5">
    <original>SYGLCSPLNLLN</original>
    <variation>RMVPELQFIVSP</variation>
    <location>
        <begin position="1030"/>
        <end position="1041"/>
    </location>
</feature>
<feature type="splice variant" id="VSP_028437" description="In isoform B." evidence="5">
    <location>
        <begin position="1042"/>
        <end position="2455"/>
    </location>
</feature>
<evidence type="ECO:0000250" key="1">
    <source>
        <dbReference type="UniProtKB" id="Q9HCE0"/>
    </source>
</evidence>
<evidence type="ECO:0000256" key="2">
    <source>
        <dbReference type="SAM" id="MobiDB-lite"/>
    </source>
</evidence>
<evidence type="ECO:0000269" key="3">
    <source>
    </source>
</evidence>
<evidence type="ECO:0000269" key="4">
    <source>
    </source>
</evidence>
<evidence type="ECO:0000303" key="5">
    <source>
    </source>
</evidence>
<evidence type="ECO:0000303" key="6">
    <source>
    </source>
</evidence>
<evidence type="ECO:0000305" key="7"/>
<evidence type="ECO:0000312" key="8">
    <source>
        <dbReference type="FlyBase" id="FBgn0038651"/>
    </source>
</evidence>
<accession>Q9VE34</accession>
<accession>Q8MT53</accession>
<comment type="function">
    <text evidence="4">Involved in autophagy. Plays a role in late steps of autophagy.</text>
</comment>
<comment type="subcellular location">
    <subcellularLocation>
        <location evidence="1">Cytoplasm</location>
        <location evidence="1">Perinuclear region</location>
    </subcellularLocation>
    <subcellularLocation>
        <location evidence="1">Lysosome</location>
    </subcellularLocation>
</comment>
<comment type="alternative products">
    <event type="alternative splicing"/>
    <isoform>
        <id>Q9VE34-1</id>
        <name>C</name>
        <sequence type="displayed"/>
    </isoform>
    <isoform>
        <id>Q9VE34-2</id>
        <name>B</name>
        <sequence type="described" ref="VSP_028436 VSP_028437"/>
    </isoform>
</comment>
<comment type="disruption phenotype">
    <text evidence="4">Conditional CG14299 knockdown in fly larval fat bodies causes defects in the late steps of autophagy and a block in digestion of autolysosomes. Conditional down-regulation in adult fly retina reveals an incremental loss of neurons and of retina structure over time.</text>
</comment>
<comment type="similarity">
    <text evidence="7">Belongs to the EPG5 family.</text>
</comment>
<name>EPG5_DROME</name>
<reference key="1">
    <citation type="journal article" date="2000" name="Science">
        <title>The genome sequence of Drosophila melanogaster.</title>
        <authorList>
            <person name="Adams M.D."/>
            <person name="Celniker S.E."/>
            <person name="Holt R.A."/>
            <person name="Evans C.A."/>
            <person name="Gocayne J.D."/>
            <person name="Amanatides P.G."/>
            <person name="Scherer S.E."/>
            <person name="Li P.W."/>
            <person name="Hoskins R.A."/>
            <person name="Galle R.F."/>
            <person name="George R.A."/>
            <person name="Lewis S.E."/>
            <person name="Richards S."/>
            <person name="Ashburner M."/>
            <person name="Henderson S.N."/>
            <person name="Sutton G.G."/>
            <person name="Wortman J.R."/>
            <person name="Yandell M.D."/>
            <person name="Zhang Q."/>
            <person name="Chen L.X."/>
            <person name="Brandon R.C."/>
            <person name="Rogers Y.-H.C."/>
            <person name="Blazej R.G."/>
            <person name="Champe M."/>
            <person name="Pfeiffer B.D."/>
            <person name="Wan K.H."/>
            <person name="Doyle C."/>
            <person name="Baxter E.G."/>
            <person name="Helt G."/>
            <person name="Nelson C.R."/>
            <person name="Miklos G.L.G."/>
            <person name="Abril J.F."/>
            <person name="Agbayani A."/>
            <person name="An H.-J."/>
            <person name="Andrews-Pfannkoch C."/>
            <person name="Baldwin D."/>
            <person name="Ballew R.M."/>
            <person name="Basu A."/>
            <person name="Baxendale J."/>
            <person name="Bayraktaroglu L."/>
            <person name="Beasley E.M."/>
            <person name="Beeson K.Y."/>
            <person name="Benos P.V."/>
            <person name="Berman B.P."/>
            <person name="Bhandari D."/>
            <person name="Bolshakov S."/>
            <person name="Borkova D."/>
            <person name="Botchan M.R."/>
            <person name="Bouck J."/>
            <person name="Brokstein P."/>
            <person name="Brottier P."/>
            <person name="Burtis K.C."/>
            <person name="Busam D.A."/>
            <person name="Butler H."/>
            <person name="Cadieu E."/>
            <person name="Center A."/>
            <person name="Chandra I."/>
            <person name="Cherry J.M."/>
            <person name="Cawley S."/>
            <person name="Dahlke C."/>
            <person name="Davenport L.B."/>
            <person name="Davies P."/>
            <person name="de Pablos B."/>
            <person name="Delcher A."/>
            <person name="Deng Z."/>
            <person name="Mays A.D."/>
            <person name="Dew I."/>
            <person name="Dietz S.M."/>
            <person name="Dodson K."/>
            <person name="Doup L.E."/>
            <person name="Downes M."/>
            <person name="Dugan-Rocha S."/>
            <person name="Dunkov B.C."/>
            <person name="Dunn P."/>
            <person name="Durbin K.J."/>
            <person name="Evangelista C.C."/>
            <person name="Ferraz C."/>
            <person name="Ferriera S."/>
            <person name="Fleischmann W."/>
            <person name="Fosler C."/>
            <person name="Gabrielian A.E."/>
            <person name="Garg N.S."/>
            <person name="Gelbart W.M."/>
            <person name="Glasser K."/>
            <person name="Glodek A."/>
            <person name="Gong F."/>
            <person name="Gorrell J.H."/>
            <person name="Gu Z."/>
            <person name="Guan P."/>
            <person name="Harris M."/>
            <person name="Harris N.L."/>
            <person name="Harvey D.A."/>
            <person name="Heiman T.J."/>
            <person name="Hernandez J.R."/>
            <person name="Houck J."/>
            <person name="Hostin D."/>
            <person name="Houston K.A."/>
            <person name="Howland T.J."/>
            <person name="Wei M.-H."/>
            <person name="Ibegwam C."/>
            <person name="Jalali M."/>
            <person name="Kalush F."/>
            <person name="Karpen G.H."/>
            <person name="Ke Z."/>
            <person name="Kennison J.A."/>
            <person name="Ketchum K.A."/>
            <person name="Kimmel B.E."/>
            <person name="Kodira C.D."/>
            <person name="Kraft C.L."/>
            <person name="Kravitz S."/>
            <person name="Kulp D."/>
            <person name="Lai Z."/>
            <person name="Lasko P."/>
            <person name="Lei Y."/>
            <person name="Levitsky A.A."/>
            <person name="Li J.H."/>
            <person name="Li Z."/>
            <person name="Liang Y."/>
            <person name="Lin X."/>
            <person name="Liu X."/>
            <person name="Mattei B."/>
            <person name="McIntosh T.C."/>
            <person name="McLeod M.P."/>
            <person name="McPherson D."/>
            <person name="Merkulov G."/>
            <person name="Milshina N.V."/>
            <person name="Mobarry C."/>
            <person name="Morris J."/>
            <person name="Moshrefi A."/>
            <person name="Mount S.M."/>
            <person name="Moy M."/>
            <person name="Murphy B."/>
            <person name="Murphy L."/>
            <person name="Muzny D.M."/>
            <person name="Nelson D.L."/>
            <person name="Nelson D.R."/>
            <person name="Nelson K.A."/>
            <person name="Nixon K."/>
            <person name="Nusskern D.R."/>
            <person name="Pacleb J.M."/>
            <person name="Palazzolo M."/>
            <person name="Pittman G.S."/>
            <person name="Pan S."/>
            <person name="Pollard J."/>
            <person name="Puri V."/>
            <person name="Reese M.G."/>
            <person name="Reinert K."/>
            <person name="Remington K."/>
            <person name="Saunders R.D.C."/>
            <person name="Scheeler F."/>
            <person name="Shen H."/>
            <person name="Shue B.C."/>
            <person name="Siden-Kiamos I."/>
            <person name="Simpson M."/>
            <person name="Skupski M.P."/>
            <person name="Smith T.J."/>
            <person name="Spier E."/>
            <person name="Spradling A.C."/>
            <person name="Stapleton M."/>
            <person name="Strong R."/>
            <person name="Sun E."/>
            <person name="Svirskas R."/>
            <person name="Tector C."/>
            <person name="Turner R."/>
            <person name="Venter E."/>
            <person name="Wang A.H."/>
            <person name="Wang X."/>
            <person name="Wang Z.-Y."/>
            <person name="Wassarman D.A."/>
            <person name="Weinstock G.M."/>
            <person name="Weissenbach J."/>
            <person name="Williams S.M."/>
            <person name="Woodage T."/>
            <person name="Worley K.C."/>
            <person name="Wu D."/>
            <person name="Yang S."/>
            <person name="Yao Q.A."/>
            <person name="Ye J."/>
            <person name="Yeh R.-F."/>
            <person name="Zaveri J.S."/>
            <person name="Zhan M."/>
            <person name="Zhang G."/>
            <person name="Zhao Q."/>
            <person name="Zheng L."/>
            <person name="Zheng X.H."/>
            <person name="Zhong F.N."/>
            <person name="Zhong W."/>
            <person name="Zhou X."/>
            <person name="Zhu S.C."/>
            <person name="Zhu X."/>
            <person name="Smith H.O."/>
            <person name="Gibbs R.A."/>
            <person name="Myers E.W."/>
            <person name="Rubin G.M."/>
            <person name="Venter J.C."/>
        </authorList>
    </citation>
    <scope>NUCLEOTIDE SEQUENCE [LARGE SCALE GENOMIC DNA]</scope>
    <source>
        <strain>Berkeley</strain>
    </source>
</reference>
<reference key="2">
    <citation type="journal article" date="2002" name="Genome Biol.">
        <title>Annotation of the Drosophila melanogaster euchromatic genome: a systematic review.</title>
        <authorList>
            <person name="Misra S."/>
            <person name="Crosby M.A."/>
            <person name="Mungall C.J."/>
            <person name="Matthews B.B."/>
            <person name="Campbell K.S."/>
            <person name="Hradecky P."/>
            <person name="Huang Y."/>
            <person name="Kaminker J.S."/>
            <person name="Millburn G.H."/>
            <person name="Prochnik S.E."/>
            <person name="Smith C.D."/>
            <person name="Tupy J.L."/>
            <person name="Whitfield E.J."/>
            <person name="Bayraktaroglu L."/>
            <person name="Berman B.P."/>
            <person name="Bettencourt B.R."/>
            <person name="Celniker S.E."/>
            <person name="de Grey A.D.N.J."/>
            <person name="Drysdale R.A."/>
            <person name="Harris N.L."/>
            <person name="Richter J."/>
            <person name="Russo S."/>
            <person name="Schroeder A.J."/>
            <person name="Shu S.Q."/>
            <person name="Stapleton M."/>
            <person name="Yamada C."/>
            <person name="Ashburner M."/>
            <person name="Gelbart W.M."/>
            <person name="Rubin G.M."/>
            <person name="Lewis S.E."/>
        </authorList>
    </citation>
    <scope>GENOME REANNOTATION</scope>
    <source>
        <strain>Berkeley</strain>
    </source>
</reference>
<reference key="3">
    <citation type="journal article" date="2002" name="Genome Biol.">
        <title>A Drosophila full-length cDNA resource.</title>
        <authorList>
            <person name="Stapleton M."/>
            <person name="Carlson J.W."/>
            <person name="Brokstein P."/>
            <person name="Yu C."/>
            <person name="Champe M."/>
            <person name="George R.A."/>
            <person name="Guarin H."/>
            <person name="Kronmiller B."/>
            <person name="Pacleb J.M."/>
            <person name="Park S."/>
            <person name="Wan K.H."/>
            <person name="Rubin G.M."/>
            <person name="Celniker S.E."/>
        </authorList>
    </citation>
    <scope>NUCLEOTIDE SEQUENCE [LARGE SCALE MRNA] (ISOFORM B)</scope>
    <source>
        <strain>Berkeley</strain>
        <tissue>Embryo</tissue>
    </source>
</reference>
<reference key="4">
    <citation type="journal article" date="2008" name="J. Proteome Res.">
        <title>Phosphoproteome analysis of Drosophila melanogaster embryos.</title>
        <authorList>
            <person name="Zhai B."/>
            <person name="Villen J."/>
            <person name="Beausoleil S.A."/>
            <person name="Mintseris J."/>
            <person name="Gygi S.P."/>
        </authorList>
    </citation>
    <scope>PHOSPHORYLATION [LARGE SCALE ANALYSIS] AT SER-44 AND SER-467</scope>
    <scope>IDENTIFICATION BY MASS SPECTROMETRY</scope>
    <source>
        <tissue>Embryo</tissue>
    </source>
</reference>
<reference key="5">
    <citation type="journal article" date="2016" name="Brain">
        <title>EPG5-related Vici syndrome: a paradigm of neurodevelopmental disorders with defective autophagy.</title>
        <authorList>
            <person name="Byrne S."/>
            <person name="Jansen L."/>
            <person name="U-King-Im J.M."/>
            <person name="Siddiqui A."/>
            <person name="Lidov H.G."/>
            <person name="Bodi I."/>
            <person name="Smith L."/>
            <person name="Mein R."/>
            <person name="Cullup T."/>
            <person name="Dionisi-Vici C."/>
            <person name="Al-Gazali L."/>
            <person name="Al-Owain M."/>
            <person name="Bruwer Z."/>
            <person name="Al Thihli K."/>
            <person name="El-Garhy R."/>
            <person name="Flanigan K.M."/>
            <person name="Manickam K."/>
            <person name="Zmuda E."/>
            <person name="Banks W."/>
            <person name="Gershoni-Baruch R."/>
            <person name="Mandel H."/>
            <person name="Dagan E."/>
            <person name="Raas-Rothschild A."/>
            <person name="Barash H."/>
            <person name="Filloux F."/>
            <person name="Creel D."/>
            <person name="Harris M."/>
            <person name="Hamosh A."/>
            <person name="Koelker S."/>
            <person name="Ebrahimi-Fakhari D."/>
            <person name="Hoffmann G.F."/>
            <person name="Manchester D."/>
            <person name="Boyer P.J."/>
            <person name="Manzur A.Y."/>
            <person name="Lourenco C.M."/>
            <person name="Pilz D.T."/>
            <person name="Kamath A."/>
            <person name="Prabhakar P."/>
            <person name="Rao V.K."/>
            <person name="Rogers R.C."/>
            <person name="Ryan M.M."/>
            <person name="Brown N.J."/>
            <person name="McLean C.A."/>
            <person name="Said E."/>
            <person name="Schara U."/>
            <person name="Stein A."/>
            <person name="Sewry C."/>
            <person name="Travan L."/>
            <person name="Wijburg F.A."/>
            <person name="Zenker M."/>
            <person name="Mohammed S."/>
            <person name="Fanto M."/>
            <person name="Gautel M."/>
            <person name="Jungbluth H."/>
        </authorList>
    </citation>
    <scope>FUNCTION</scope>
    <scope>DISRUPTION PHENOTYPE</scope>
</reference>
<organism>
    <name type="scientific">Drosophila melanogaster</name>
    <name type="common">Fruit fly</name>
    <dbReference type="NCBI Taxonomy" id="7227"/>
    <lineage>
        <taxon>Eukaryota</taxon>
        <taxon>Metazoa</taxon>
        <taxon>Ecdysozoa</taxon>
        <taxon>Arthropoda</taxon>
        <taxon>Hexapoda</taxon>
        <taxon>Insecta</taxon>
        <taxon>Pterygota</taxon>
        <taxon>Neoptera</taxon>
        <taxon>Endopterygota</taxon>
        <taxon>Diptera</taxon>
        <taxon>Brachycera</taxon>
        <taxon>Muscomorpha</taxon>
        <taxon>Ephydroidea</taxon>
        <taxon>Drosophilidae</taxon>
        <taxon>Drosophila</taxon>
        <taxon>Sophophora</taxon>
    </lineage>
</organism>
<keyword id="KW-0025">Alternative splicing</keyword>
<keyword id="KW-0072">Autophagy</keyword>
<keyword id="KW-0963">Cytoplasm</keyword>
<keyword id="KW-0458">Lysosome</keyword>
<keyword id="KW-0597">Phosphoprotein</keyword>
<keyword id="KW-1185">Reference proteome</keyword>
<sequence length="2455" mass="280692">MATLEKPKKEKSKKSRNRVPIEKEEEEPAELSTSEEQRPAENVSLLEEFERVATLASSSSGEAIISHECCISSDVGVTSQEPEGTQEPTETEAQPSAPSAPPSTTVHVVQYPNLQPMQLSNAQVEEHSAKIVYRQAESPTGFALARSHIKLLSTEELRQIYDCPELELAKQFELEFLMNSLLETSEADPLYAAVMEYYELQGKITSNLHDVEKLRKGCAESQKQIWVRQPVTRTFSGTCGDGNVVQECVTYDVIQVDPIKLEVAKTSLTGLYDLVCHAYTNNSITAKITKVKVDQIINDLLTYPNLDGHSVVSLHHTQSGEALQCVSQLRRAISILFSFVRRPSPNANFDKDLKEWLRKLIALQLLLATREDHWFLLFNILRCPNGVGSWAAQFLQLPGTRAVRRGSQQNELPLDLNSPELNHCMAVLQILLMPVKKRNEYLKSQAQAHRELSDTPGATDRWIVVDSDGEDSHTPAGECVGLKESDLVALLNQMPFEKIFTSALRIEKFLDDYIIEPDMITAQQMLAVVVFFSQLVKTIGEGLLTYNNERYKQLAKRLGRLVRHTLQYVFDYNELFINNNLYKSSEMYERIQVELQALLVRACGYIYRTRNLGTWQYFSTLPFGTLDAEVIWHLFYYLNVGFPTDLANDLVSNAEAAFQAEDFWRKFDLANADVAPEDMYYLLQTFFEMANERNRSKDGSLVKAICLHIFHIGYIHKSTREICYKTARDMLANLMDEDLFGCVLVQLKMRYGEVDQAAYLFKALPLENWHPSMDTFEVLSNWLLHFDYQSSESQLARLIISHLNWGLDCEGRLFLPHNIHVRMAHLVNEALNKYAPEVIGASGISESVRQVSSLIDSTQSSREQFTNWCWRMVSVLRLHLMDQGVESVRRTLQHPTEPLLFIPELERMEMIFQGVNENRPLALYVGMLVSLHGHSIPLICQHGFILLQQLLLDHRHAATIRCLELIVPLFLETPETLANCESFQRLITTLLNADRTYLKLAKDMVYANSIGPILELLDNMLHHQIISYTSYGLCSPLNLLNIWLNCFTTLPGWSQNSNLLYLLDRMLRISYQFPDCRAQAVEFFYNYYKDCTEWKSAPKGSALKAFFGGQSVSRIPLISPQNCWLNLVILEIEFRLVDTRIFPELLRQISAQPVEAALKKTISLSKTSAFPASQLVIFKYAQLLASMESTHALFPIVCQKFFELYLWRVPTENESLNFSHNFGVSDKFYEYNVPLMKSIKSQLKSAESYYSALATKNANDDAMAHFYRNCCKLMQNCALWLEDTQINRFTSDAEHLPAQYNSEKLRELLSGHVNHWTEFLCLASLRKEQRHQADQWGRKVMRLSNQKAPRTPVQPKQRQPPAQHIKSLLKSYEKIVENPLHIRVEPIKTPPIDGVIVAQIQKKMTTLNSTANNYHYKTSELNSLDLNYLERVPTLYSMIPYEETRRKECTSLLFKRNCTAPAQIKLTPEHIRINDVISRKQAQNRERHDKIIEDILLAMSVESFAQAIEELGVCIGALLVAPLESSVTQIGVRVFYDIVDNLNEVTMKFQPTHDLYFQVLEKLGVFLEADQAAQGLAILRLALKRPDLLELLAGVFVPSRTDVDHFLSMYEFLIDSHLKHCDTQTLFVLFSKFDLLGWMEAYQPKLSEINRLLLLVLQGLEAWSQPDSSLLQDLFRRHLVHIFGYDFPQHYGEVMQLVLDRTSDQKLMPVVLLDLLNALFVRSNCAELSLQQSEVRVHELALDFARRQKLFTLKAATDTLLLLSRHFQKERLHHGLHGLYPKHKDYCQALVLWFTSFGHTLLASAICSYQELLADQISDIVFGSIVETYSPWLIPYTEETVSGVAHWIRQLTPGQSKVLLPWSEQHVSSCKLMIRSFVATIIQVLQYLPSSNKILEHVFAWYVHHFAQSSTTGHVLAPIHEGLAQLPWERFLPPAQHVELLYDSLQKFLPESHAMLGHIFIRIEWNNWFAQMPQPVSILSRLFTIFVKIAFEPNIHIHPNTSKILEDAIRYPWHLVECSELEQLLKWFVASVEPAIALKIPAESNYADRAVLELLRLACAMLPERSAQDAVVLGTAKRMLYTRSMVRMQRACGAKHQKLLATKEGERAFSNAFLELLDSIDGAISSCSEHRTMEEQRREALNLMLELVAPTQTQSQEVSNIHIKALVWWQQRCSPGNLVMCSTLPAIGHLNTYIASIYSLLEASIENYFRTSPEIASWHAPSWQGLMEALSMSLPKLDLMPIMQGSYFFSLHVFVLYKMEEIATDGDKVTFLQDLSQLLENLKTSPQTEPRMALVWGVIIARGCQIAQVNQQVKKPLHMLARHLQIASTKAEGWGDGLLGVIGLKSEVITNRRKVLTRCLACVIFSLFPANRDLRIPSEEYESALRELSMLLANKKFTDIKPLIVRAVSLLKESTFPDIRAVPHMVCRLISIFYEESYLTTIPEVWDFEFKLMAT</sequence>
<proteinExistence type="evidence at protein level"/>
<gene>
    <name evidence="6 8" type="primary">Epg5</name>
    <name evidence="8" type="ORF">CG14299</name>
</gene>
<dbReference type="EMBL" id="AE014297">
    <property type="protein sequence ID" value="AAF55595.2"/>
    <property type="molecule type" value="Genomic_DNA"/>
</dbReference>
<dbReference type="EMBL" id="AE014297">
    <property type="protein sequence ID" value="AAX52966.1"/>
    <property type="molecule type" value="Genomic_DNA"/>
</dbReference>
<dbReference type="EMBL" id="AY118376">
    <property type="protein sequence ID" value="AAM48405.1"/>
    <property type="molecule type" value="mRNA"/>
</dbReference>
<dbReference type="RefSeq" id="NP_650752.2">
    <molecule id="Q9VE34-1"/>
    <property type="nucleotide sequence ID" value="NM_142495.4"/>
</dbReference>
<dbReference type="BioGRID" id="67261">
    <property type="interactions" value="2"/>
</dbReference>
<dbReference type="FunCoup" id="Q9VE34">
    <property type="interactions" value="2030"/>
</dbReference>
<dbReference type="IntAct" id="Q9VE34">
    <property type="interactions" value="4"/>
</dbReference>
<dbReference type="STRING" id="7227.FBpp0271890"/>
<dbReference type="iPTMnet" id="Q9VE34"/>
<dbReference type="PaxDb" id="7227-FBpp0271890"/>
<dbReference type="EnsemblMetazoa" id="FBtr0273382">
    <molecule id="Q9VE34-1"/>
    <property type="protein sequence ID" value="FBpp0271890"/>
    <property type="gene ID" value="FBgn0038651"/>
</dbReference>
<dbReference type="GeneID" id="42256"/>
<dbReference type="KEGG" id="dme:Dmel_CG14299"/>
<dbReference type="UCSC" id="CG14299-RB">
    <molecule id="Q9VE34-1"/>
    <property type="organism name" value="d. melanogaster"/>
</dbReference>
<dbReference type="AGR" id="FB:FBgn0038651"/>
<dbReference type="CTD" id="57724"/>
<dbReference type="FlyBase" id="FBgn0038651">
    <property type="gene designation" value="Epg5"/>
</dbReference>
<dbReference type="VEuPathDB" id="VectorBase:FBgn0038651"/>
<dbReference type="eggNOG" id="KOG3622">
    <property type="taxonomic scope" value="Eukaryota"/>
</dbReference>
<dbReference type="GeneTree" id="ENSGT00390000007354"/>
<dbReference type="HOGENOM" id="CLU_000773_0_0_1"/>
<dbReference type="InParanoid" id="Q9VE34"/>
<dbReference type="OMA" id="LYCYEAE"/>
<dbReference type="OrthoDB" id="75419at2759"/>
<dbReference type="PhylomeDB" id="Q9VE34"/>
<dbReference type="BioGRID-ORCS" id="42256">
    <property type="hits" value="0 hits in 1 CRISPR screen"/>
</dbReference>
<dbReference type="GenomeRNAi" id="42256"/>
<dbReference type="PRO" id="PR:Q9VE34"/>
<dbReference type="Proteomes" id="UP000000803">
    <property type="component" value="Chromosome 3R"/>
</dbReference>
<dbReference type="Bgee" id="FBgn0038651">
    <property type="expression patterns" value="Expressed in midgut large flat cell (Drosophila) in digestive tract and 144 other cell types or tissues"/>
</dbReference>
<dbReference type="ExpressionAtlas" id="Q9VE34">
    <property type="expression patterns" value="baseline and differential"/>
</dbReference>
<dbReference type="GO" id="GO:0005737">
    <property type="term" value="C:cytoplasm"/>
    <property type="evidence" value="ECO:0000318"/>
    <property type="project" value="GO_Central"/>
</dbReference>
<dbReference type="GO" id="GO:0005764">
    <property type="term" value="C:lysosome"/>
    <property type="evidence" value="ECO:0007669"/>
    <property type="project" value="UniProtKB-SubCell"/>
</dbReference>
<dbReference type="GO" id="GO:0048471">
    <property type="term" value="C:perinuclear region of cytoplasm"/>
    <property type="evidence" value="ECO:0007669"/>
    <property type="project" value="UniProtKB-SubCell"/>
</dbReference>
<dbReference type="GO" id="GO:0097352">
    <property type="term" value="P:autophagosome maturation"/>
    <property type="evidence" value="ECO:0000318"/>
    <property type="project" value="GO_Central"/>
</dbReference>
<dbReference type="GO" id="GO:0006914">
    <property type="term" value="P:autophagy"/>
    <property type="evidence" value="ECO:0000315"/>
    <property type="project" value="FlyBase"/>
</dbReference>
<dbReference type="InterPro" id="IPR051436">
    <property type="entry name" value="Autophagy-related_EPG5"/>
</dbReference>
<dbReference type="PANTHER" id="PTHR31139">
    <property type="entry name" value="ECTOPIC P GRANULES PROTEIN 5 HOMOLOG"/>
    <property type="match status" value="1"/>
</dbReference>
<dbReference type="PANTHER" id="PTHR31139:SF4">
    <property type="entry name" value="ECTOPIC P GRANULES PROTEIN 5 HOMOLOG"/>
    <property type="match status" value="1"/>
</dbReference>